<organism>
    <name type="scientific">Mycobacterium phage D29</name>
    <name type="common">Mycobacteriophage D29</name>
    <dbReference type="NCBI Taxonomy" id="28369"/>
    <lineage>
        <taxon>Viruses</taxon>
        <taxon>Duplodnaviria</taxon>
        <taxon>Heunggongvirae</taxon>
        <taxon>Uroviricota</taxon>
        <taxon>Caudoviricetes</taxon>
        <taxon>Fromanvirus</taxon>
    </lineage>
</organism>
<name>VG28_BPMD2</name>
<dbReference type="EMBL" id="AF022214">
    <property type="protein sequence ID" value="AAC18469.1"/>
    <property type="molecule type" value="Genomic_DNA"/>
</dbReference>
<dbReference type="PIR" id="B72803">
    <property type="entry name" value="B72803"/>
</dbReference>
<dbReference type="RefSeq" id="NP_046844.1">
    <property type="nucleotide sequence ID" value="NC_001900.1"/>
</dbReference>
<dbReference type="SMR" id="O64222"/>
<dbReference type="GeneID" id="1261554"/>
<dbReference type="KEGG" id="vg:1261554"/>
<dbReference type="OrthoDB" id="1419at10239"/>
<dbReference type="Proteomes" id="UP000002131">
    <property type="component" value="Segment"/>
</dbReference>
<keyword id="KW-1185">Reference proteome</keyword>
<feature type="initiator methionine" description="Removed; by host" evidence="1">
    <location>
        <position position="1"/>
    </location>
</feature>
<feature type="chain" id="PRO_0000164744" description="Minor tail protein Gp28">
    <location>
        <begin position="2"/>
        <end position="596"/>
    </location>
</feature>
<protein>
    <recommendedName>
        <fullName>Minor tail protein Gp28</fullName>
    </recommendedName>
</protein>
<organismHost>
    <name type="scientific">Mycobacterium</name>
    <dbReference type="NCBI Taxonomy" id="1763"/>
</organismHost>
<sequence>MSGLTSVAQAEDLWRKIQLRRCKREQERLKPPDVELRDGDFRLRGLVAGERLLEWEFIENETGVATLQLSLSHYLAKWVMNHRGRAKRNVILNVEKQGARWSGMMDHYRVVKEDSGDCYLEIVFLHDFEQTKHIRVWCNPFLRPELQFPKIWIIFGPAKWCLLVTLFVNLLRLETSLWTIPDDPTDIWEWMGPSFNPSKWRNIVKPFPFLLDNSPITMVFSRFGTFYDTAKQILENHQLTLTCRRYIKDRDPHPFDDLKGLWGIDPVEGLLQLIPLRDGCVVWDIEDNSGWGTETAFGGSWLTGFVRAVVNLAGDGQVEGVDVFTGDYTFPGEYYSPWFLGTSPRAPHVVFEEGPLTGIKSSEFSYYEATDTSFLAGGQSAPGINEGISALVNIGGDLLTSFINSQLAVLGAVGGAIDLPPLGGLMDAVLNPLYSDVFGAFMEVPTLRAMGISLPIAGLEDIVTGLGDFHYYENMVDSPMKAFTLSAFAAIAAQIHKTRARTAHTLKVSDAAPYIFAPKPYGHCWIGDRVGTSVLGYPVEHQLFVERIRKVKYRIDKDGMKPLEIEIGYREPKNPALHILEEIKRFNGAMGQAGIL</sequence>
<reference key="1">
    <citation type="journal article" date="1998" name="J. Mol. Biol.">
        <title>Genome structure of mycobacteriophage D29: implications for phage evolution.</title>
        <authorList>
            <person name="Ford M.E."/>
            <person name="Sarkis G.J."/>
            <person name="Belanger A.E."/>
            <person name="Hendrix R.W."/>
            <person name="Hatfull G.F."/>
        </authorList>
    </citation>
    <scope>NUCLEOTIDE SEQUENCE [LARGE SCALE GENOMIC DNA]</scope>
</reference>
<proteinExistence type="inferred from homology"/>
<accession>O64222</accession>
<evidence type="ECO:0000250" key="1"/>
<gene>
    <name type="primary">28</name>
</gene>